<feature type="chain" id="PRO_0000365125" description="Eukaryotic translation initiation factor 3 subunit J-B">
    <location>
        <begin position="1"/>
        <end position="263"/>
    </location>
</feature>
<feature type="region of interest" description="Disordered" evidence="2">
    <location>
        <begin position="1"/>
        <end position="75"/>
    </location>
</feature>
<feature type="region of interest" description="Disordered" evidence="2">
    <location>
        <begin position="214"/>
        <end position="235"/>
    </location>
</feature>
<feature type="coiled-coil region" evidence="1">
    <location>
        <begin position="30"/>
        <end position="127"/>
    </location>
</feature>
<feature type="compositionally biased region" description="Acidic residues" evidence="2">
    <location>
        <begin position="1"/>
        <end position="13"/>
    </location>
</feature>
<feature type="compositionally biased region" description="Acidic residues" evidence="2">
    <location>
        <begin position="30"/>
        <end position="50"/>
    </location>
</feature>
<feature type="compositionally biased region" description="Basic and acidic residues" evidence="2">
    <location>
        <begin position="51"/>
        <end position="75"/>
    </location>
</feature>
<organism>
    <name type="scientific">Danio rerio</name>
    <name type="common">Zebrafish</name>
    <name type="synonym">Brachydanio rerio</name>
    <dbReference type="NCBI Taxonomy" id="7955"/>
    <lineage>
        <taxon>Eukaryota</taxon>
        <taxon>Metazoa</taxon>
        <taxon>Chordata</taxon>
        <taxon>Craniata</taxon>
        <taxon>Vertebrata</taxon>
        <taxon>Euteleostomi</taxon>
        <taxon>Actinopterygii</taxon>
        <taxon>Neopterygii</taxon>
        <taxon>Teleostei</taxon>
        <taxon>Ostariophysi</taxon>
        <taxon>Cypriniformes</taxon>
        <taxon>Danionidae</taxon>
        <taxon>Danioninae</taxon>
        <taxon>Danio</taxon>
    </lineage>
</organism>
<dbReference type="EMBL" id="BC044399">
    <property type="protein sequence ID" value="AAH44399.1"/>
    <property type="molecule type" value="mRNA"/>
</dbReference>
<dbReference type="RefSeq" id="NP_998667.1">
    <property type="nucleotide sequence ID" value="NM_213502.1"/>
</dbReference>
<dbReference type="SMR" id="Q803P1"/>
<dbReference type="FunCoup" id="Q803P1">
    <property type="interactions" value="1011"/>
</dbReference>
<dbReference type="STRING" id="7955.ENSDARP00000069883"/>
<dbReference type="PaxDb" id="7955-ENSDARP00000069883"/>
<dbReference type="PeptideAtlas" id="Q803P1"/>
<dbReference type="GeneID" id="406823"/>
<dbReference type="KEGG" id="dre:406823"/>
<dbReference type="AGR" id="ZFIN:ZDB-GENE-040426-2900"/>
<dbReference type="CTD" id="406823"/>
<dbReference type="ZFIN" id="ZDB-GENE-040426-2900">
    <property type="gene designation" value="eif3jb"/>
</dbReference>
<dbReference type="eggNOG" id="KOG4813">
    <property type="taxonomic scope" value="Eukaryota"/>
</dbReference>
<dbReference type="InParanoid" id="Q803P1"/>
<dbReference type="OrthoDB" id="20381at2759"/>
<dbReference type="PhylomeDB" id="Q803P1"/>
<dbReference type="PRO" id="PR:Q803P1"/>
<dbReference type="Proteomes" id="UP000000437">
    <property type="component" value="Chromosome 7"/>
</dbReference>
<dbReference type="GO" id="GO:0016282">
    <property type="term" value="C:eukaryotic 43S preinitiation complex"/>
    <property type="evidence" value="ECO:0007669"/>
    <property type="project" value="UniProtKB-UniRule"/>
</dbReference>
<dbReference type="GO" id="GO:0033290">
    <property type="term" value="C:eukaryotic 48S preinitiation complex"/>
    <property type="evidence" value="ECO:0007669"/>
    <property type="project" value="UniProtKB-UniRule"/>
</dbReference>
<dbReference type="GO" id="GO:0005852">
    <property type="term" value="C:eukaryotic translation initiation factor 3 complex"/>
    <property type="evidence" value="ECO:0000250"/>
    <property type="project" value="UniProtKB"/>
</dbReference>
<dbReference type="GO" id="GO:0003743">
    <property type="term" value="F:translation initiation factor activity"/>
    <property type="evidence" value="ECO:0007669"/>
    <property type="project" value="UniProtKB-UniRule"/>
</dbReference>
<dbReference type="GO" id="GO:0001732">
    <property type="term" value="P:formation of cytoplasmic translation initiation complex"/>
    <property type="evidence" value="ECO:0007669"/>
    <property type="project" value="UniProtKB-UniRule"/>
</dbReference>
<dbReference type="FunFam" id="1.10.246.60:FF:000001">
    <property type="entry name" value="Eukaryotic translation initiation factor 3 subunit J"/>
    <property type="match status" value="1"/>
</dbReference>
<dbReference type="Gene3D" id="1.10.246.60">
    <property type="entry name" value="Eukaryotic translation initiation factor 3 like domains"/>
    <property type="match status" value="1"/>
</dbReference>
<dbReference type="HAMAP" id="MF_03009">
    <property type="entry name" value="eIF3j"/>
    <property type="match status" value="1"/>
</dbReference>
<dbReference type="InterPro" id="IPR023194">
    <property type="entry name" value="eIF3-like_dom_sf"/>
</dbReference>
<dbReference type="InterPro" id="IPR013906">
    <property type="entry name" value="eIF3j"/>
</dbReference>
<dbReference type="PANTHER" id="PTHR21681">
    <property type="entry name" value="EUKARYOTIC TRANSLATION INITIATION FACTOR 3 SUBUNIT J"/>
    <property type="match status" value="1"/>
</dbReference>
<dbReference type="PANTHER" id="PTHR21681:SF0">
    <property type="entry name" value="EUKARYOTIC TRANSLATION INITIATION FACTOR 3 SUBUNIT J"/>
    <property type="match status" value="1"/>
</dbReference>
<dbReference type="Pfam" id="PF08597">
    <property type="entry name" value="eIF3_subunit"/>
    <property type="match status" value="1"/>
</dbReference>
<evidence type="ECO:0000255" key="1">
    <source>
        <dbReference type="HAMAP-Rule" id="MF_03009"/>
    </source>
</evidence>
<evidence type="ECO:0000256" key="2">
    <source>
        <dbReference type="SAM" id="MobiDB-lite"/>
    </source>
</evidence>
<reference key="1">
    <citation type="submission" date="2003-01" db="EMBL/GenBank/DDBJ databases">
        <authorList>
            <consortium name="NIH - Zebrafish Gene Collection (ZGC) project"/>
        </authorList>
    </citation>
    <scope>NUCLEOTIDE SEQUENCE [LARGE SCALE MRNA]</scope>
    <source>
        <strain>AB</strain>
    </source>
</reference>
<sequence length="263" mass="29887">MADSDEWDADNFEPNEPIKIATAGRLDRWEGEDEEEDVKDNWDDEEEEKEEEKKVEQKIAEVKPPEKKKLSDKIKEKELLQKKKQEELKKNQETAASESLTLEEQLAEKARLKKLQEEADMELAREAFGVDPAAANASTTVNTTNASGIEAMCPSSKDDFVTFEKLLKEKITQFEKSVHYPSFLESLFRELCISLEVDDLKKISTSLSVLLTEKQKQEKEKKANKKKKKGVVPGGGLKANMKDDFADYGGFDGGYGNEYDDFM</sequence>
<accession>Q803P1</accession>
<name>EI3JB_DANRE</name>
<keyword id="KW-0175">Coiled coil</keyword>
<keyword id="KW-0963">Cytoplasm</keyword>
<keyword id="KW-0396">Initiation factor</keyword>
<keyword id="KW-0648">Protein biosynthesis</keyword>
<keyword id="KW-1185">Reference proteome</keyword>
<protein>
    <recommendedName>
        <fullName evidence="1">Eukaryotic translation initiation factor 3 subunit J-B</fullName>
        <shortName evidence="1">eIF3j-B</shortName>
    </recommendedName>
    <alternativeName>
        <fullName evidence="1">Eukaryotic translation initiation factor 3 subunit 1-B</fullName>
    </alternativeName>
    <alternativeName>
        <fullName evidence="1">eIF-3-alpha-B</fullName>
    </alternativeName>
    <alternativeName>
        <fullName evidence="1">eIF3 p35-B</fullName>
    </alternativeName>
</protein>
<proteinExistence type="evidence at transcript level"/>
<gene>
    <name type="primary">eif3jb</name>
    <name type="synonym">eif3s1b</name>
    <name type="ORF">zgc:55443</name>
</gene>
<comment type="function">
    <text evidence="1">Component of the eukaryotic translation initiation factor 3 (eIF-3) complex, which is involved in protein synthesis of a specialized repertoire of mRNAs and, together with other initiation factors, stimulates binding of mRNA and methionyl-tRNAi to the 40S ribosome. The eIF-3 complex specifically targets and initiates translation of a subset of mRNAs involved in cell proliferation.</text>
</comment>
<comment type="subunit">
    <text evidence="1">Component of the eukaryotic translation initiation factor 3 (eIF-3) complex, which is composed of 13 subunits: eif3a, eif3b, eif3c, eif3d, eif3e, eif3f, eif3g, eif3h, eif3i, eif3j, eif3k, eif3l and eif3m.</text>
</comment>
<comment type="subcellular location">
    <subcellularLocation>
        <location evidence="1">Cytoplasm</location>
    </subcellularLocation>
</comment>
<comment type="similarity">
    <text evidence="1">Belongs to the eIF-3 subunit J family.</text>
</comment>